<evidence type="ECO:0000255" key="1">
    <source>
        <dbReference type="HAMAP-Rule" id="MF_00765"/>
    </source>
</evidence>
<evidence type="ECO:0000305" key="2"/>
<protein>
    <recommendedName>
        <fullName evidence="1">Dual-action ribosomal maturation protein DarP</fullName>
    </recommendedName>
    <alternativeName>
        <fullName evidence="1">Large ribosomal subunit assembly factor DarP</fullName>
    </alternativeName>
</protein>
<reference key="1">
    <citation type="journal article" date="2000" name="Science">
        <title>Complete genome sequence of Neisseria meningitidis serogroup B strain MC58.</title>
        <authorList>
            <person name="Tettelin H."/>
            <person name="Saunders N.J."/>
            <person name="Heidelberg J.F."/>
            <person name="Jeffries A.C."/>
            <person name="Nelson K.E."/>
            <person name="Eisen J.A."/>
            <person name="Ketchum K.A."/>
            <person name="Hood D.W."/>
            <person name="Peden J.F."/>
            <person name="Dodson R.J."/>
            <person name="Nelson W.C."/>
            <person name="Gwinn M.L."/>
            <person name="DeBoy R.T."/>
            <person name="Peterson J.D."/>
            <person name="Hickey E.K."/>
            <person name="Haft D.H."/>
            <person name="Salzberg S.L."/>
            <person name="White O."/>
            <person name="Fleischmann R.D."/>
            <person name="Dougherty B.A."/>
            <person name="Mason T.M."/>
            <person name="Ciecko A."/>
            <person name="Parksey D.S."/>
            <person name="Blair E."/>
            <person name="Cittone H."/>
            <person name="Clark E.B."/>
            <person name="Cotton M.D."/>
            <person name="Utterback T.R."/>
            <person name="Khouri H.M."/>
            <person name="Qin H."/>
            <person name="Vamathevan J.J."/>
            <person name="Gill J."/>
            <person name="Scarlato V."/>
            <person name="Masignani V."/>
            <person name="Pizza M."/>
            <person name="Grandi G."/>
            <person name="Sun L."/>
            <person name="Smith H.O."/>
            <person name="Fraser C.M."/>
            <person name="Moxon E.R."/>
            <person name="Rappuoli R."/>
            <person name="Venter J.C."/>
        </authorList>
    </citation>
    <scope>NUCLEOTIDE SEQUENCE [LARGE SCALE GENOMIC DNA]</scope>
    <source>
        <strain>ATCC BAA-335 / MC58</strain>
    </source>
</reference>
<sequence>MFEQEDEWISKTQMKKQMNDLQDLGMALTKLSNDTLKKIGLDADLYEAVTAYKKITSNGALKRQAQFIGRLMRDTDPAPIEAFLAKLRGDDAAHNAFLQRVEQARVRLLADDGALTQFMSDFPHADAGKLRTLIRNTKKEQEQNKPPKNFRALFQELKTVMENGDAEI</sequence>
<accession>Q9JZZ2</accession>
<name>DARP_NEIMB</name>
<comment type="function">
    <text evidence="1">Member of a network of 50S ribosomal subunit biogenesis factors which assembles along the 30S-50S interface, preventing incorrect 23S rRNA structures from forming. Promotes peptidyl transferase center (PTC) maturation.</text>
</comment>
<comment type="subcellular location">
    <subcellularLocation>
        <location evidence="1">Cytoplasm</location>
    </subcellularLocation>
    <text evidence="1">Associates with late stage pre-50S ribosomal subunits.</text>
</comment>
<comment type="similarity">
    <text evidence="1">Belongs to the DarP family.</text>
</comment>
<comment type="sequence caution" evidence="2">
    <conflict type="erroneous initiation">
        <sequence resource="EMBL-CDS" id="AAF41251"/>
    </conflict>
    <text>Extended N-terminus.</text>
</comment>
<proteinExistence type="inferred from homology"/>
<feature type="chain" id="PRO_0000208219" description="Dual-action ribosomal maturation protein DarP">
    <location>
        <begin position="1"/>
        <end position="168"/>
    </location>
</feature>
<gene>
    <name evidence="1" type="primary">darP</name>
    <name type="ordered locus">NMB0840</name>
</gene>
<dbReference type="EMBL" id="AE002098">
    <property type="protein sequence ID" value="AAF41251.1"/>
    <property type="status" value="ALT_INIT"/>
    <property type="molecule type" value="Genomic_DNA"/>
</dbReference>
<dbReference type="PIR" id="E81151">
    <property type="entry name" value="E81151"/>
</dbReference>
<dbReference type="RefSeq" id="NP_273881.1">
    <property type="nucleotide sequence ID" value="NC_003112.2"/>
</dbReference>
<dbReference type="SMR" id="Q9JZZ2"/>
<dbReference type="FunCoup" id="Q9JZZ2">
    <property type="interactions" value="69"/>
</dbReference>
<dbReference type="STRING" id="122586.NMB0840"/>
<dbReference type="PaxDb" id="122586-NMB0840"/>
<dbReference type="DNASU" id="902954"/>
<dbReference type="KEGG" id="nme:NMB0840"/>
<dbReference type="PATRIC" id="fig|122586.8.peg.1052"/>
<dbReference type="HOGENOM" id="CLU_106757_2_0_4"/>
<dbReference type="InParanoid" id="Q9JZZ2"/>
<dbReference type="OrthoDB" id="5293604at2"/>
<dbReference type="Proteomes" id="UP000000425">
    <property type="component" value="Chromosome"/>
</dbReference>
<dbReference type="GO" id="GO:0005737">
    <property type="term" value="C:cytoplasm"/>
    <property type="evidence" value="ECO:0007669"/>
    <property type="project" value="UniProtKB-SubCell"/>
</dbReference>
<dbReference type="GO" id="GO:0043022">
    <property type="term" value="F:ribosome binding"/>
    <property type="evidence" value="ECO:0007669"/>
    <property type="project" value="UniProtKB-UniRule"/>
</dbReference>
<dbReference type="GO" id="GO:0019843">
    <property type="term" value="F:rRNA binding"/>
    <property type="evidence" value="ECO:0007669"/>
    <property type="project" value="UniProtKB-UniRule"/>
</dbReference>
<dbReference type="GO" id="GO:1902626">
    <property type="term" value="P:assembly of large subunit precursor of preribosome"/>
    <property type="evidence" value="ECO:0007669"/>
    <property type="project" value="UniProtKB-UniRule"/>
</dbReference>
<dbReference type="CDD" id="cd16331">
    <property type="entry name" value="YjgA-like"/>
    <property type="match status" value="1"/>
</dbReference>
<dbReference type="Gene3D" id="1.10.60.30">
    <property type="entry name" value="PSPTO4464-like domains"/>
    <property type="match status" value="2"/>
</dbReference>
<dbReference type="HAMAP" id="MF_00765">
    <property type="entry name" value="DarP"/>
    <property type="match status" value="1"/>
</dbReference>
<dbReference type="InterPro" id="IPR006839">
    <property type="entry name" value="DarP"/>
</dbReference>
<dbReference type="InterPro" id="IPR023153">
    <property type="entry name" value="DarP_sf"/>
</dbReference>
<dbReference type="NCBIfam" id="NF003593">
    <property type="entry name" value="PRK05255.1-1"/>
    <property type="match status" value="1"/>
</dbReference>
<dbReference type="PANTHER" id="PTHR38101">
    <property type="entry name" value="UPF0307 PROTEIN YJGA"/>
    <property type="match status" value="1"/>
</dbReference>
<dbReference type="PANTHER" id="PTHR38101:SF1">
    <property type="entry name" value="UPF0307 PROTEIN YJGA"/>
    <property type="match status" value="1"/>
</dbReference>
<dbReference type="Pfam" id="PF04751">
    <property type="entry name" value="DarP"/>
    <property type="match status" value="1"/>
</dbReference>
<dbReference type="PIRSF" id="PIRSF016183">
    <property type="entry name" value="UCP016183"/>
    <property type="match status" value="1"/>
</dbReference>
<dbReference type="SUPFAM" id="SSF158710">
    <property type="entry name" value="PSPTO4464-like"/>
    <property type="match status" value="1"/>
</dbReference>
<organism>
    <name type="scientific">Neisseria meningitidis serogroup B (strain ATCC BAA-335 / MC58)</name>
    <dbReference type="NCBI Taxonomy" id="122586"/>
    <lineage>
        <taxon>Bacteria</taxon>
        <taxon>Pseudomonadati</taxon>
        <taxon>Pseudomonadota</taxon>
        <taxon>Betaproteobacteria</taxon>
        <taxon>Neisseriales</taxon>
        <taxon>Neisseriaceae</taxon>
        <taxon>Neisseria</taxon>
    </lineage>
</organism>
<keyword id="KW-0963">Cytoplasm</keyword>
<keyword id="KW-1185">Reference proteome</keyword>
<keyword id="KW-0690">Ribosome biogenesis</keyword>
<keyword id="KW-0694">RNA-binding</keyword>
<keyword id="KW-0699">rRNA-binding</keyword>